<keyword id="KW-0051">Antiviral defense</keyword>
<gene>
    <name evidence="2" type="primary">brxA</name>
    <name type="ordered locus">EcHS_A0336</name>
</gene>
<name>BRXA_ECOHS</name>
<dbReference type="EMBL" id="CP000802">
    <property type="protein sequence ID" value="ABV04724.1"/>
    <property type="molecule type" value="Genomic_DNA"/>
</dbReference>
<dbReference type="SMR" id="P0DUF6"/>
<dbReference type="KEGG" id="ecx:EcHS_A0336"/>
<dbReference type="GO" id="GO:0051607">
    <property type="term" value="P:defense response to virus"/>
    <property type="evidence" value="ECO:0007669"/>
    <property type="project" value="UniProtKB-KW"/>
</dbReference>
<dbReference type="Gene3D" id="1.10.3540.10">
    <property type="entry name" value="uncharacterized protein from magnetospirillum magneticum domain"/>
    <property type="match status" value="1"/>
</dbReference>
<dbReference type="InterPro" id="IPR014948">
    <property type="entry name" value="BrxA"/>
</dbReference>
<dbReference type="InterPro" id="IPR023137">
    <property type="entry name" value="BrxA_sf"/>
</dbReference>
<dbReference type="Pfam" id="PF08849">
    <property type="entry name" value="BrxA"/>
    <property type="match status" value="1"/>
</dbReference>
<protein>
    <recommendedName>
        <fullName evidence="2">BREX protein BrxA</fullName>
    </recommendedName>
</protein>
<organism>
    <name type="scientific">Escherichia coli O9:H4 (strain HS)</name>
    <dbReference type="NCBI Taxonomy" id="331112"/>
    <lineage>
        <taxon>Bacteria</taxon>
        <taxon>Pseudomonadati</taxon>
        <taxon>Pseudomonadota</taxon>
        <taxon>Gammaproteobacteria</taxon>
        <taxon>Enterobacterales</taxon>
        <taxon>Enterobacteriaceae</taxon>
        <taxon>Escherichia</taxon>
    </lineage>
</organism>
<accession>P0DUF6</accession>
<accession>A0A7M3S2P1</accession>
<evidence type="ECO:0000269" key="1">
    <source>
    </source>
</evidence>
<evidence type="ECO:0000303" key="2">
    <source>
    </source>
</evidence>
<evidence type="ECO:0000305" key="3"/>
<comment type="function">
    <text evidence="1">BREX systems (bacteriophage exclusion) provide immunity against bacteriophage. A probably non-essential part of a type 1 BREX system which protects against dsDNA phage. This system allows phage adsorption but prevents phage DNA replication, without degradation of the phage DNA. Methylation of bacterial DNA by PglX guides self/non-self discrimination. When the brxA-brxB-brxC-pglX-pglZ-brxL genes are transformed into a susceptible E.coli strain (BW25113) they confer very high resistance to infection by bacteriophage VR7 and VpaE1, about 100-fold protection against lambda, T5 and T7 and no protection against RNA phage Qbeta, ssDNA phage M13 or dSDNA phage T4 and VR5. Glycosylated phage DNA is not susceptible to BREX. The BREX system does not confer resistance to lysogenic lambda phage, i.e. prophage that are integrated into the chromosomal DNA and then induced to form phage.</text>
</comment>
<comment type="induction">
    <text evidence="1">Transcribed at slowly increasing levels as cells progress from lag to exponential to stationary phase.</text>
</comment>
<comment type="disruption phenotype">
    <text evidence="1">No visible phenotype, host DNA is methylated on fifth position of 5'-GGTAAG-3' in chromosomal DNA, BREX still confers phage resistance.</text>
</comment>
<comment type="similarity">
    <text evidence="3">Belongs to the BrxA family.</text>
</comment>
<proteinExistence type="evidence at transcript level"/>
<feature type="chain" id="PRO_0000452153" description="BREX protein BrxA">
    <location>
        <begin position="1"/>
        <end position="213"/>
    </location>
</feature>
<reference key="1">
    <citation type="journal article" date="2008" name="J. Bacteriol.">
        <title>The pangenome structure of Escherichia coli: comparative genomic analysis of E. coli commensal and pathogenic isolates.</title>
        <authorList>
            <person name="Rasko D.A."/>
            <person name="Rosovitz M.J."/>
            <person name="Myers G.S.A."/>
            <person name="Mongodin E.F."/>
            <person name="Fricke W.F."/>
            <person name="Gajer P."/>
            <person name="Crabtree J."/>
            <person name="Sebaihia M."/>
            <person name="Thomson N.R."/>
            <person name="Chaudhuri R."/>
            <person name="Henderson I.R."/>
            <person name="Sperandio V."/>
            <person name="Ravel J."/>
        </authorList>
    </citation>
    <scope>NUCLEOTIDE SEQUENCE [LARGE SCALE GENOMIC DNA]</scope>
    <source>
        <strain>HS</strain>
    </source>
</reference>
<reference key="2">
    <citation type="journal article" date="2019" name="Nucleic Acids Res.">
        <title>BREX system of Escherichia coli distinguishes self from non-self by methylation of a specific DNA site.</title>
        <authorList>
            <person name="Gordeeva J."/>
            <person name="Morozova N."/>
            <person name="Sierro N."/>
            <person name="Isaev A."/>
            <person name="Sinkunas T."/>
            <person name="Tsvetkova K."/>
            <person name="Matlashov M."/>
            <person name="Truncaite L."/>
            <person name="Morgan R.D."/>
            <person name="Ivanov N.V."/>
            <person name="Siksnys V."/>
            <person name="Zeng L."/>
            <person name="Severinov K."/>
        </authorList>
    </citation>
    <scope>FUNCTION</scope>
    <scope>INDUCTION</scope>
    <scope>DISRUPTION PHENOTYPE</scope>
    <source>
        <strain>HS</strain>
    </source>
</reference>
<sequence length="213" mass="23999">MRAAFQSSEGFSMIKNDKAWIGDLLGGPLMSRESRVIAELLLTDPDEQTWQEQIVGHNILQASSPNTAKRYAATIRLRLNTLDKSAWTLIAEGSERERQQLLFVALMLHSPVVKDFLAEVVNDLRRQFKEKLPGNSWNEFVNSQVRLHPVLASYSDSSIAKMGNNLVKALAEAGYVDTPRRRNLQAVYLLPETQAVLQRLGQQDLISILEGKR</sequence>